<sequence>MLERLENCEKRFIEIEEEISKPEVINDARLVRTLAQERADLQDKVEMYRRYKTMAKELEEAKNLLESEKDEDMRGMVRGEIENLEKSLTDLYEQMTFELLPKDPNDDKSIIMEIRAGTGGDEAGLFASDLYKMYIRYALLKNWKTEVIDINGNVAGIIKEVVFEVNGKGAFSRLKYERGVHRVQRVPQTEASGRIHTSTATVAVLPQVEEVDIDINMDEVRVDIFHSSGAGGQNVQKVATAIRLTHMPTGLVVCCQDERSQLKNKNKAFAVLRARLMELEQSKVDEERTESRRAQVGQADRSEKIRTYNFPQDRLTDHRIGLTAHNLPHILEGYLDEIIDTLATHEQTELLKGED</sequence>
<reference key="1">
    <citation type="journal article" date="2005" name="Nat. Biotechnol.">
        <title>Genome sequence of the chlorinated compound-respiring bacterium Dehalococcoides species strain CBDB1.</title>
        <authorList>
            <person name="Kube M."/>
            <person name="Beck A."/>
            <person name="Zinder S.H."/>
            <person name="Kuhl H."/>
            <person name="Reinhardt R."/>
            <person name="Adrian L."/>
        </authorList>
    </citation>
    <scope>NUCLEOTIDE SEQUENCE [LARGE SCALE GENOMIC DNA]</scope>
    <source>
        <strain>CBDB1</strain>
    </source>
</reference>
<protein>
    <recommendedName>
        <fullName evidence="1">Peptide chain release factor 1</fullName>
        <shortName evidence="1">RF-1</shortName>
    </recommendedName>
</protein>
<accession>Q3ZYA9</accession>
<name>RF1_DEHMC</name>
<keyword id="KW-0963">Cytoplasm</keyword>
<keyword id="KW-0488">Methylation</keyword>
<keyword id="KW-0648">Protein biosynthesis</keyword>
<evidence type="ECO:0000255" key="1">
    <source>
        <dbReference type="HAMAP-Rule" id="MF_00093"/>
    </source>
</evidence>
<comment type="function">
    <text evidence="1">Peptide chain release factor 1 directs the termination of translation in response to the peptide chain termination codons UAG and UAA.</text>
</comment>
<comment type="subcellular location">
    <subcellularLocation>
        <location evidence="1">Cytoplasm</location>
    </subcellularLocation>
</comment>
<comment type="PTM">
    <text evidence="1">Methylated by PrmC. Methylation increases the termination efficiency of RF1.</text>
</comment>
<comment type="similarity">
    <text evidence="1">Belongs to the prokaryotic/mitochondrial release factor family.</text>
</comment>
<proteinExistence type="inferred from homology"/>
<gene>
    <name evidence="1" type="primary">prfA</name>
    <name type="ordered locus">cbdbA1127</name>
</gene>
<dbReference type="EMBL" id="AJ965256">
    <property type="protein sequence ID" value="CAI83222.1"/>
    <property type="molecule type" value="Genomic_DNA"/>
</dbReference>
<dbReference type="RefSeq" id="WP_011309573.1">
    <property type="nucleotide sequence ID" value="NC_007356.1"/>
</dbReference>
<dbReference type="SMR" id="Q3ZYA9"/>
<dbReference type="KEGG" id="deh:cbdbA1127"/>
<dbReference type="HOGENOM" id="CLU_036856_0_1_0"/>
<dbReference type="Proteomes" id="UP000000433">
    <property type="component" value="Chromosome"/>
</dbReference>
<dbReference type="GO" id="GO:0005737">
    <property type="term" value="C:cytoplasm"/>
    <property type="evidence" value="ECO:0007669"/>
    <property type="project" value="UniProtKB-SubCell"/>
</dbReference>
<dbReference type="GO" id="GO:0016149">
    <property type="term" value="F:translation release factor activity, codon specific"/>
    <property type="evidence" value="ECO:0007669"/>
    <property type="project" value="UniProtKB-UniRule"/>
</dbReference>
<dbReference type="FunFam" id="3.30.160.20:FF:000004">
    <property type="entry name" value="Peptide chain release factor 1"/>
    <property type="match status" value="1"/>
</dbReference>
<dbReference type="FunFam" id="3.30.70.1660:FF:000002">
    <property type="entry name" value="Peptide chain release factor 1"/>
    <property type="match status" value="1"/>
</dbReference>
<dbReference type="Gene3D" id="3.30.160.20">
    <property type="match status" value="1"/>
</dbReference>
<dbReference type="Gene3D" id="3.30.70.1660">
    <property type="match status" value="2"/>
</dbReference>
<dbReference type="Gene3D" id="6.10.140.1950">
    <property type="match status" value="1"/>
</dbReference>
<dbReference type="HAMAP" id="MF_00093">
    <property type="entry name" value="Rel_fac_1"/>
    <property type="match status" value="1"/>
</dbReference>
<dbReference type="InterPro" id="IPR005139">
    <property type="entry name" value="PCRF"/>
</dbReference>
<dbReference type="InterPro" id="IPR000352">
    <property type="entry name" value="Pep_chain_release_fac_I"/>
</dbReference>
<dbReference type="InterPro" id="IPR045853">
    <property type="entry name" value="Pep_chain_release_fac_I_sf"/>
</dbReference>
<dbReference type="InterPro" id="IPR050057">
    <property type="entry name" value="Prokaryotic/Mito_RF"/>
</dbReference>
<dbReference type="InterPro" id="IPR004373">
    <property type="entry name" value="RF-1"/>
</dbReference>
<dbReference type="NCBIfam" id="TIGR00019">
    <property type="entry name" value="prfA"/>
    <property type="match status" value="1"/>
</dbReference>
<dbReference type="NCBIfam" id="NF001859">
    <property type="entry name" value="PRK00591.1"/>
    <property type="match status" value="1"/>
</dbReference>
<dbReference type="PANTHER" id="PTHR43804">
    <property type="entry name" value="LD18447P"/>
    <property type="match status" value="1"/>
</dbReference>
<dbReference type="PANTHER" id="PTHR43804:SF7">
    <property type="entry name" value="LD18447P"/>
    <property type="match status" value="1"/>
</dbReference>
<dbReference type="Pfam" id="PF03462">
    <property type="entry name" value="PCRF"/>
    <property type="match status" value="1"/>
</dbReference>
<dbReference type="Pfam" id="PF00472">
    <property type="entry name" value="RF-1"/>
    <property type="match status" value="1"/>
</dbReference>
<dbReference type="SMART" id="SM00937">
    <property type="entry name" value="PCRF"/>
    <property type="match status" value="1"/>
</dbReference>
<dbReference type="SUPFAM" id="SSF75620">
    <property type="entry name" value="Release factor"/>
    <property type="match status" value="1"/>
</dbReference>
<organism>
    <name type="scientific">Dehalococcoides mccartyi (strain CBDB1)</name>
    <dbReference type="NCBI Taxonomy" id="255470"/>
    <lineage>
        <taxon>Bacteria</taxon>
        <taxon>Bacillati</taxon>
        <taxon>Chloroflexota</taxon>
        <taxon>Dehalococcoidia</taxon>
        <taxon>Dehalococcoidales</taxon>
        <taxon>Dehalococcoidaceae</taxon>
        <taxon>Dehalococcoides</taxon>
    </lineage>
</organism>
<feature type="chain" id="PRO_0000263265" description="Peptide chain release factor 1">
    <location>
        <begin position="1"/>
        <end position="355"/>
    </location>
</feature>
<feature type="modified residue" description="N5-methylglutamine" evidence="1">
    <location>
        <position position="233"/>
    </location>
</feature>